<gene>
    <name evidence="1" type="primary">eno</name>
    <name type="ordered locus">Ecok1_27130</name>
    <name type="ORF">APECO1_3751</name>
</gene>
<evidence type="ECO:0000255" key="1">
    <source>
        <dbReference type="HAMAP-Rule" id="MF_00318"/>
    </source>
</evidence>
<feature type="chain" id="PRO_0000280847" description="Enolase">
    <location>
        <begin position="1"/>
        <end position="432"/>
    </location>
</feature>
<feature type="active site" description="Proton donor" evidence="1">
    <location>
        <position position="209"/>
    </location>
</feature>
<feature type="active site" description="Proton acceptor" evidence="1">
    <location>
        <position position="342"/>
    </location>
</feature>
<feature type="binding site" evidence="1">
    <location>
        <position position="167"/>
    </location>
    <ligand>
        <name>(2R)-2-phosphoglycerate</name>
        <dbReference type="ChEBI" id="CHEBI:58289"/>
    </ligand>
</feature>
<feature type="binding site" evidence="1">
    <location>
        <position position="246"/>
    </location>
    <ligand>
        <name>Mg(2+)</name>
        <dbReference type="ChEBI" id="CHEBI:18420"/>
    </ligand>
</feature>
<feature type="binding site" evidence="1">
    <location>
        <position position="290"/>
    </location>
    <ligand>
        <name>Mg(2+)</name>
        <dbReference type="ChEBI" id="CHEBI:18420"/>
    </ligand>
</feature>
<feature type="binding site" evidence="1">
    <location>
        <position position="317"/>
    </location>
    <ligand>
        <name>Mg(2+)</name>
        <dbReference type="ChEBI" id="CHEBI:18420"/>
    </ligand>
</feature>
<feature type="binding site" evidence="1">
    <location>
        <position position="342"/>
    </location>
    <ligand>
        <name>(2R)-2-phosphoglycerate</name>
        <dbReference type="ChEBI" id="CHEBI:58289"/>
    </ligand>
</feature>
<feature type="binding site" evidence="1">
    <location>
        <position position="371"/>
    </location>
    <ligand>
        <name>(2R)-2-phosphoglycerate</name>
        <dbReference type="ChEBI" id="CHEBI:58289"/>
    </ligand>
</feature>
<feature type="binding site" evidence="1">
    <location>
        <position position="372"/>
    </location>
    <ligand>
        <name>(2R)-2-phosphoglycerate</name>
        <dbReference type="ChEBI" id="CHEBI:58289"/>
    </ligand>
</feature>
<feature type="binding site" evidence="1">
    <location>
        <position position="393"/>
    </location>
    <ligand>
        <name>(2R)-2-phosphoglycerate</name>
        <dbReference type="ChEBI" id="CHEBI:58289"/>
    </ligand>
</feature>
<proteinExistence type="inferred from homology"/>
<accession>A1AEW7</accession>
<organism>
    <name type="scientific">Escherichia coli O1:K1 / APEC</name>
    <dbReference type="NCBI Taxonomy" id="405955"/>
    <lineage>
        <taxon>Bacteria</taxon>
        <taxon>Pseudomonadati</taxon>
        <taxon>Pseudomonadota</taxon>
        <taxon>Gammaproteobacteria</taxon>
        <taxon>Enterobacterales</taxon>
        <taxon>Enterobacteriaceae</taxon>
        <taxon>Escherichia</taxon>
    </lineage>
</organism>
<name>ENO_ECOK1</name>
<reference key="1">
    <citation type="journal article" date="2007" name="J. Bacteriol.">
        <title>The genome sequence of avian pathogenic Escherichia coli strain O1:K1:H7 shares strong similarities with human extraintestinal pathogenic E. coli genomes.</title>
        <authorList>
            <person name="Johnson T.J."/>
            <person name="Kariyawasam S."/>
            <person name="Wannemuehler Y."/>
            <person name="Mangiamele P."/>
            <person name="Johnson S.J."/>
            <person name="Doetkott C."/>
            <person name="Skyberg J.A."/>
            <person name="Lynne A.M."/>
            <person name="Johnson J.R."/>
            <person name="Nolan L.K."/>
        </authorList>
    </citation>
    <scope>NUCLEOTIDE SEQUENCE [LARGE SCALE GENOMIC DNA]</scope>
</reference>
<comment type="function">
    <text evidence="1">Catalyzes the reversible conversion of 2-phosphoglycerate (2-PG) into phosphoenolpyruvate (PEP). It is essential for the degradation of carbohydrates via glycolysis.</text>
</comment>
<comment type="catalytic activity">
    <reaction evidence="1">
        <text>(2R)-2-phosphoglycerate = phosphoenolpyruvate + H2O</text>
        <dbReference type="Rhea" id="RHEA:10164"/>
        <dbReference type="ChEBI" id="CHEBI:15377"/>
        <dbReference type="ChEBI" id="CHEBI:58289"/>
        <dbReference type="ChEBI" id="CHEBI:58702"/>
        <dbReference type="EC" id="4.2.1.11"/>
    </reaction>
</comment>
<comment type="cofactor">
    <cofactor evidence="1">
        <name>Mg(2+)</name>
        <dbReference type="ChEBI" id="CHEBI:18420"/>
    </cofactor>
    <text evidence="1">Binds a second Mg(2+) ion via substrate during catalysis.</text>
</comment>
<comment type="pathway">
    <text evidence="1">Carbohydrate degradation; glycolysis; pyruvate from D-glyceraldehyde 3-phosphate: step 4/5.</text>
</comment>
<comment type="subunit">
    <text evidence="1">Component of the RNA degradosome, a multiprotein complex involved in RNA processing and mRNA degradation.</text>
</comment>
<comment type="subcellular location">
    <subcellularLocation>
        <location evidence="1">Cytoplasm</location>
    </subcellularLocation>
    <subcellularLocation>
        <location evidence="1">Secreted</location>
    </subcellularLocation>
    <subcellularLocation>
        <location evidence="1">Cell surface</location>
    </subcellularLocation>
    <text evidence="1">Fractions of enolase are present in both the cytoplasm and on the cell surface.</text>
</comment>
<comment type="similarity">
    <text evidence="1">Belongs to the enolase family.</text>
</comment>
<dbReference type="EC" id="4.2.1.11" evidence="1"/>
<dbReference type="EMBL" id="CP000468">
    <property type="protein sequence ID" value="ABJ02207.1"/>
    <property type="molecule type" value="Genomic_DNA"/>
</dbReference>
<dbReference type="RefSeq" id="WP_000036723.1">
    <property type="nucleotide sequence ID" value="NZ_CADILS010000024.1"/>
</dbReference>
<dbReference type="SASBDB" id="A1AEW7"/>
<dbReference type="SMR" id="A1AEW7"/>
<dbReference type="GeneID" id="93779219"/>
<dbReference type="KEGG" id="ecv:APECO1_3751"/>
<dbReference type="HOGENOM" id="CLU_031223_2_1_6"/>
<dbReference type="UniPathway" id="UPA00109">
    <property type="reaction ID" value="UER00187"/>
</dbReference>
<dbReference type="Proteomes" id="UP000008216">
    <property type="component" value="Chromosome"/>
</dbReference>
<dbReference type="GO" id="GO:0009986">
    <property type="term" value="C:cell surface"/>
    <property type="evidence" value="ECO:0007669"/>
    <property type="project" value="UniProtKB-SubCell"/>
</dbReference>
<dbReference type="GO" id="GO:0005576">
    <property type="term" value="C:extracellular region"/>
    <property type="evidence" value="ECO:0007669"/>
    <property type="project" value="UniProtKB-SubCell"/>
</dbReference>
<dbReference type="GO" id="GO:0000015">
    <property type="term" value="C:phosphopyruvate hydratase complex"/>
    <property type="evidence" value="ECO:0007669"/>
    <property type="project" value="InterPro"/>
</dbReference>
<dbReference type="GO" id="GO:0000287">
    <property type="term" value="F:magnesium ion binding"/>
    <property type="evidence" value="ECO:0007669"/>
    <property type="project" value="UniProtKB-UniRule"/>
</dbReference>
<dbReference type="GO" id="GO:0004634">
    <property type="term" value="F:phosphopyruvate hydratase activity"/>
    <property type="evidence" value="ECO:0007669"/>
    <property type="project" value="UniProtKB-UniRule"/>
</dbReference>
<dbReference type="GO" id="GO:0006096">
    <property type="term" value="P:glycolytic process"/>
    <property type="evidence" value="ECO:0007669"/>
    <property type="project" value="UniProtKB-UniRule"/>
</dbReference>
<dbReference type="CDD" id="cd03313">
    <property type="entry name" value="enolase"/>
    <property type="match status" value="1"/>
</dbReference>
<dbReference type="FunFam" id="3.20.20.120:FF:000001">
    <property type="entry name" value="Enolase"/>
    <property type="match status" value="1"/>
</dbReference>
<dbReference type="FunFam" id="3.30.390.10:FF:000001">
    <property type="entry name" value="Enolase"/>
    <property type="match status" value="1"/>
</dbReference>
<dbReference type="Gene3D" id="3.20.20.120">
    <property type="entry name" value="Enolase-like C-terminal domain"/>
    <property type="match status" value="1"/>
</dbReference>
<dbReference type="Gene3D" id="3.30.390.10">
    <property type="entry name" value="Enolase-like, N-terminal domain"/>
    <property type="match status" value="1"/>
</dbReference>
<dbReference type="HAMAP" id="MF_00318">
    <property type="entry name" value="Enolase"/>
    <property type="match status" value="1"/>
</dbReference>
<dbReference type="InterPro" id="IPR000941">
    <property type="entry name" value="Enolase"/>
</dbReference>
<dbReference type="InterPro" id="IPR036849">
    <property type="entry name" value="Enolase-like_C_sf"/>
</dbReference>
<dbReference type="InterPro" id="IPR029017">
    <property type="entry name" value="Enolase-like_N"/>
</dbReference>
<dbReference type="InterPro" id="IPR020810">
    <property type="entry name" value="Enolase_C"/>
</dbReference>
<dbReference type="InterPro" id="IPR020809">
    <property type="entry name" value="Enolase_CS"/>
</dbReference>
<dbReference type="InterPro" id="IPR020811">
    <property type="entry name" value="Enolase_N"/>
</dbReference>
<dbReference type="NCBIfam" id="TIGR01060">
    <property type="entry name" value="eno"/>
    <property type="match status" value="1"/>
</dbReference>
<dbReference type="PANTHER" id="PTHR11902">
    <property type="entry name" value="ENOLASE"/>
    <property type="match status" value="1"/>
</dbReference>
<dbReference type="PANTHER" id="PTHR11902:SF1">
    <property type="entry name" value="ENOLASE"/>
    <property type="match status" value="1"/>
</dbReference>
<dbReference type="Pfam" id="PF00113">
    <property type="entry name" value="Enolase_C"/>
    <property type="match status" value="1"/>
</dbReference>
<dbReference type="Pfam" id="PF03952">
    <property type="entry name" value="Enolase_N"/>
    <property type="match status" value="1"/>
</dbReference>
<dbReference type="PIRSF" id="PIRSF001400">
    <property type="entry name" value="Enolase"/>
    <property type="match status" value="1"/>
</dbReference>
<dbReference type="PRINTS" id="PR00148">
    <property type="entry name" value="ENOLASE"/>
</dbReference>
<dbReference type="SFLD" id="SFLDS00001">
    <property type="entry name" value="Enolase"/>
    <property type="match status" value="1"/>
</dbReference>
<dbReference type="SFLD" id="SFLDF00002">
    <property type="entry name" value="enolase"/>
    <property type="match status" value="1"/>
</dbReference>
<dbReference type="SMART" id="SM01192">
    <property type="entry name" value="Enolase_C"/>
    <property type="match status" value="1"/>
</dbReference>
<dbReference type="SMART" id="SM01193">
    <property type="entry name" value="Enolase_N"/>
    <property type="match status" value="1"/>
</dbReference>
<dbReference type="SUPFAM" id="SSF51604">
    <property type="entry name" value="Enolase C-terminal domain-like"/>
    <property type="match status" value="1"/>
</dbReference>
<dbReference type="SUPFAM" id="SSF54826">
    <property type="entry name" value="Enolase N-terminal domain-like"/>
    <property type="match status" value="1"/>
</dbReference>
<dbReference type="PROSITE" id="PS00164">
    <property type="entry name" value="ENOLASE"/>
    <property type="match status" value="1"/>
</dbReference>
<protein>
    <recommendedName>
        <fullName evidence="1">Enolase</fullName>
        <ecNumber evidence="1">4.2.1.11</ecNumber>
    </recommendedName>
    <alternativeName>
        <fullName evidence="1">2-phospho-D-glycerate hydro-lyase</fullName>
    </alternativeName>
    <alternativeName>
        <fullName evidence="1">2-phosphoglycerate dehydratase</fullName>
    </alternativeName>
</protein>
<sequence>MSKIVKIIGREIIDSRGNPTVEAEVHLEGGFVGMAAAPSGASTGSREALELRDGDKSRFLGKGVTKAVAAVNGPIAQALIGKDAKDQAGIDKIMIDLDGTENKSKFGANAILAVSLANAKAAAAAKGMPLYEHIAELNGTPGKYSMPVPMMNIINGGEHADNNVDIQEFMIQPVGAKTVKEAIRMGSEVFHHLAKVLKAKGMNTAVGDEGGYAPNLGSNAEALAVIAEAVKAAGYELGKDITLAMDCAASEFYKDGKYVLAGEGNKAFTSEEFTHFLEELTKQYPIVSIEDGLDESDWDGFAYQTKVLGDKIQLVGDDLFVTNTKILKEGIEKGIANSILIKFNQIGSLTETLAAIKMAKDAGYTAVISHRSGETEDATIADLAVGTAAGQIKTGSMSRSDRVAKYNQLIRIEEALGEKAPYNGRKEIKGQA</sequence>
<keyword id="KW-0963">Cytoplasm</keyword>
<keyword id="KW-0324">Glycolysis</keyword>
<keyword id="KW-0456">Lyase</keyword>
<keyword id="KW-0460">Magnesium</keyword>
<keyword id="KW-0479">Metal-binding</keyword>
<keyword id="KW-1185">Reference proteome</keyword>
<keyword id="KW-0964">Secreted</keyword>